<comment type="function">
    <text evidence="1 2">Catalyzes the ATP-dependent phosphorylation of maltose to maltose 1-phosphate (By similarity). Is involved in a branched alpha-glucan biosynthetic pathway from trehalose, together with TreS, GlgE and GlgB.</text>
</comment>
<comment type="catalytic activity">
    <reaction>
        <text>D-maltose + ATP = alpha-maltose 1-phosphate + ADP + H(+)</text>
        <dbReference type="Rhea" id="RHEA:31915"/>
        <dbReference type="ChEBI" id="CHEBI:15378"/>
        <dbReference type="ChEBI" id="CHEBI:17306"/>
        <dbReference type="ChEBI" id="CHEBI:30616"/>
        <dbReference type="ChEBI" id="CHEBI:63576"/>
        <dbReference type="ChEBI" id="CHEBI:456216"/>
        <dbReference type="EC" id="2.7.1.175"/>
    </reaction>
</comment>
<comment type="pathway">
    <text>Glycan biosynthesis; glycogen biosynthesis.</text>
</comment>
<comment type="subunit">
    <text evidence="1">Monomer.</text>
</comment>
<comment type="interaction">
    <interactant intactId="EBI-25767633">
        <id>O07177</id>
    </interactant>
    <interactant intactId="EBI-11566520">
        <id>Q80XK6</id>
        <label>Atg2b</label>
    </interactant>
    <organismsDiffer>true</organismsDiffer>
    <experiments>3</experiments>
</comment>
<comment type="similarity">
    <text evidence="3">Belongs to the aminoglycoside phosphotransferase family.</text>
</comment>
<name>MAK1_MYCTU</name>
<sequence length="455" mass="49879">MTRSDTLATKLPWSDWLSRQRWYAGRNRELATVKPGVVVALRHNLDLVLVDVTYTDGATERYQVLVGWDFEPASEYGTKAAIGVADDRTGFDALYDVAGPQFLLSLIVSSAVCGTSTGEVTFTREPDVELPFAAQPRVCDAEQSNTSVIFDRRAILKVFRRVSSGINPDIELNRVLTRAGNPHVARLLGAYQFGRPNRSPTDALAYALGMVTEYEANAAEGWAMATASVRDLFAEGDLYAHEVGGDFAGESYRLGEAVASVHATLADSLGTAQATFPVDRMLARLSSTVAVVPELREYAPTIEQQFQKLAAEAITVQRVHGDLHLGQVLRTPESWLLIDFEGEPGQPLDERRAPDSPLRDVAGVLRSFEYAAYGPLVDQATDKQLAARAREWVERNRAAFCDGYAVASGIDPRDSALLLGAYELDKAVYETGYETRHRPGWLPIPLRSIARLTAS</sequence>
<evidence type="ECO:0000250" key="1"/>
<evidence type="ECO:0000269" key="2">
    <source>
    </source>
</evidence>
<evidence type="ECO:0000305" key="3"/>
<evidence type="ECO:0007829" key="4">
    <source>
        <dbReference type="PDB" id="4O7O"/>
    </source>
</evidence>
<evidence type="ECO:0007829" key="5">
    <source>
        <dbReference type="PDB" id="4O7P"/>
    </source>
</evidence>
<protein>
    <recommendedName>
        <fullName>Maltokinase</fullName>
        <shortName>MaK</shortName>
        <ecNumber>2.7.1.175</ecNumber>
    </recommendedName>
    <alternativeName>
        <fullName>Maltose-1-phosphate synthase</fullName>
    </alternativeName>
</protein>
<feature type="chain" id="PRO_0000412894" description="Maltokinase">
    <location>
        <begin position="1"/>
        <end position="455"/>
    </location>
</feature>
<feature type="helix" evidence="4">
    <location>
        <begin position="7"/>
        <end position="10"/>
    </location>
</feature>
<feature type="helix" evidence="4">
    <location>
        <begin position="13"/>
        <end position="17"/>
    </location>
</feature>
<feature type="helix" evidence="5">
    <location>
        <begin position="25"/>
        <end position="27"/>
    </location>
</feature>
<feature type="strand" evidence="4">
    <location>
        <begin position="30"/>
        <end position="42"/>
    </location>
</feature>
<feature type="strand" evidence="4">
    <location>
        <begin position="45"/>
        <end position="54"/>
    </location>
</feature>
<feature type="strand" evidence="4">
    <location>
        <begin position="59"/>
        <end position="69"/>
    </location>
</feature>
<feature type="helix" evidence="4">
    <location>
        <begin position="73"/>
        <end position="75"/>
    </location>
</feature>
<feature type="strand" evidence="4">
    <location>
        <begin position="81"/>
        <end position="85"/>
    </location>
</feature>
<feature type="strand" evidence="4">
    <location>
        <begin position="88"/>
        <end position="92"/>
    </location>
</feature>
<feature type="helix" evidence="4">
    <location>
        <begin position="93"/>
        <end position="95"/>
    </location>
</feature>
<feature type="helix" evidence="4">
    <location>
        <begin position="98"/>
        <end position="108"/>
    </location>
</feature>
<feature type="strand" evidence="4">
    <location>
        <begin position="115"/>
        <end position="117"/>
    </location>
</feature>
<feature type="strand" evidence="4">
    <location>
        <begin position="120"/>
        <end position="124"/>
    </location>
</feature>
<feature type="strand" evidence="4">
    <location>
        <begin position="138"/>
        <end position="141"/>
    </location>
</feature>
<feature type="turn" evidence="4">
    <location>
        <begin position="142"/>
        <end position="144"/>
    </location>
</feature>
<feature type="strand" evidence="4">
    <location>
        <begin position="145"/>
        <end position="162"/>
    </location>
</feature>
<feature type="helix" evidence="4">
    <location>
        <begin position="168"/>
        <end position="178"/>
    </location>
</feature>
<feature type="strand" evidence="4">
    <location>
        <begin position="186"/>
        <end position="193"/>
    </location>
</feature>
<feature type="strand" evidence="4">
    <location>
        <begin position="196"/>
        <end position="198"/>
    </location>
</feature>
<feature type="strand" evidence="4">
    <location>
        <begin position="204"/>
        <end position="215"/>
    </location>
</feature>
<feature type="helix" evidence="4">
    <location>
        <begin position="221"/>
        <end position="234"/>
    </location>
</feature>
<feature type="turn" evidence="4">
    <location>
        <begin position="237"/>
        <end position="242"/>
    </location>
</feature>
<feature type="helix" evidence="4">
    <location>
        <begin position="243"/>
        <end position="245"/>
    </location>
</feature>
<feature type="helix" evidence="4">
    <location>
        <begin position="248"/>
        <end position="269"/>
    </location>
</feature>
<feature type="strand" evidence="4">
    <location>
        <begin position="271"/>
        <end position="275"/>
    </location>
</feature>
<feature type="helix" evidence="4">
    <location>
        <begin position="278"/>
        <end position="291"/>
    </location>
</feature>
<feature type="helix" evidence="4">
    <location>
        <begin position="299"/>
        <end position="307"/>
    </location>
</feature>
<feature type="turn" evidence="4">
    <location>
        <begin position="308"/>
        <end position="311"/>
    </location>
</feature>
<feature type="strand" evidence="4">
    <location>
        <begin position="313"/>
        <end position="317"/>
    </location>
</feature>
<feature type="helix" evidence="4">
    <location>
        <begin position="325"/>
        <end position="327"/>
    </location>
</feature>
<feature type="strand" evidence="4">
    <location>
        <begin position="328"/>
        <end position="330"/>
    </location>
</feature>
<feature type="strand" evidence="4">
    <location>
        <begin position="335"/>
        <end position="337"/>
    </location>
</feature>
<feature type="strand" evidence="4">
    <location>
        <begin position="343"/>
        <end position="345"/>
    </location>
</feature>
<feature type="helix" evidence="4">
    <location>
        <begin position="348"/>
        <end position="351"/>
    </location>
</feature>
<feature type="helix" evidence="4">
    <location>
        <begin position="357"/>
        <end position="373"/>
    </location>
</feature>
<feature type="helix" evidence="4">
    <location>
        <begin position="374"/>
        <end position="376"/>
    </location>
</feature>
<feature type="strand" evidence="4">
    <location>
        <begin position="377"/>
        <end position="379"/>
    </location>
</feature>
<feature type="helix" evidence="4">
    <location>
        <begin position="383"/>
        <end position="408"/>
    </location>
</feature>
<feature type="helix" evidence="4">
    <location>
        <begin position="412"/>
        <end position="415"/>
    </location>
</feature>
<feature type="helix" evidence="4">
    <location>
        <begin position="416"/>
        <end position="437"/>
    </location>
</feature>
<feature type="helix" evidence="4">
    <location>
        <begin position="439"/>
        <end position="441"/>
    </location>
</feature>
<feature type="helix" evidence="4">
    <location>
        <begin position="443"/>
        <end position="453"/>
    </location>
</feature>
<gene>
    <name type="primary">mak</name>
    <name type="ordered locus">Rv0127</name>
</gene>
<keyword id="KW-0002">3D-structure</keyword>
<keyword id="KW-0067">ATP-binding</keyword>
<keyword id="KW-0119">Carbohydrate metabolism</keyword>
<keyword id="KW-0320">Glycogen biosynthesis</keyword>
<keyword id="KW-0321">Glycogen metabolism</keyword>
<keyword id="KW-0418">Kinase</keyword>
<keyword id="KW-0547">Nucleotide-binding</keyword>
<keyword id="KW-1185">Reference proteome</keyword>
<keyword id="KW-0808">Transferase</keyword>
<accession>O07177</accession>
<accession>L0T5L4</accession>
<reference key="1">
    <citation type="journal article" date="1998" name="Nature">
        <title>Deciphering the biology of Mycobacterium tuberculosis from the complete genome sequence.</title>
        <authorList>
            <person name="Cole S.T."/>
            <person name="Brosch R."/>
            <person name="Parkhill J."/>
            <person name="Garnier T."/>
            <person name="Churcher C.M."/>
            <person name="Harris D.E."/>
            <person name="Gordon S.V."/>
            <person name="Eiglmeier K."/>
            <person name="Gas S."/>
            <person name="Barry C.E. III"/>
            <person name="Tekaia F."/>
            <person name="Badcock K."/>
            <person name="Basham D."/>
            <person name="Brown D."/>
            <person name="Chillingworth T."/>
            <person name="Connor R."/>
            <person name="Davies R.M."/>
            <person name="Devlin K."/>
            <person name="Feltwell T."/>
            <person name="Gentles S."/>
            <person name="Hamlin N."/>
            <person name="Holroyd S."/>
            <person name="Hornsby T."/>
            <person name="Jagels K."/>
            <person name="Krogh A."/>
            <person name="McLean J."/>
            <person name="Moule S."/>
            <person name="Murphy L.D."/>
            <person name="Oliver S."/>
            <person name="Osborne J."/>
            <person name="Quail M.A."/>
            <person name="Rajandream M.A."/>
            <person name="Rogers J."/>
            <person name="Rutter S."/>
            <person name="Seeger K."/>
            <person name="Skelton S."/>
            <person name="Squares S."/>
            <person name="Squares R."/>
            <person name="Sulston J.E."/>
            <person name="Taylor K."/>
            <person name="Whitehead S."/>
            <person name="Barrell B.G."/>
        </authorList>
    </citation>
    <scope>NUCLEOTIDE SEQUENCE [LARGE SCALE GENOMIC DNA]</scope>
    <source>
        <strain>ATCC 25618 / H37Rv</strain>
    </source>
</reference>
<reference key="2">
    <citation type="journal article" date="2010" name="BMC Biochem.">
        <title>Biochemical characterization of the maltokinase from Mycobacterium bovis BCG.</title>
        <authorList>
            <person name="Mendes V."/>
            <person name="Maranha A."/>
            <person name="Lamosa P."/>
            <person name="da Costa M.S."/>
            <person name="Empadinhas N."/>
        </authorList>
    </citation>
    <scope>GENE NAME</scope>
</reference>
<reference key="3">
    <citation type="journal article" date="2010" name="Nat. Chem. Biol.">
        <title>Self-poisoning of Mycobacterium tuberculosis by targeting GlgE in an alpha-glucan pathway.</title>
        <authorList>
            <person name="Kalscheuer R."/>
            <person name="Syson K."/>
            <person name="Veeraraghavan U."/>
            <person name="Weinrick B."/>
            <person name="Biermann K.E."/>
            <person name="Liu Z."/>
            <person name="Sacchettini J.C."/>
            <person name="Besra G."/>
            <person name="Bornemann S."/>
            <person name="Jacobs W.R. Jr."/>
        </authorList>
    </citation>
    <scope>FUNCTION</scope>
    <source>
        <strain>ATCC 25618 / H37Rv</strain>
    </source>
</reference>
<reference key="4">
    <citation type="journal article" date="2011" name="Mol. Cell. Proteomics">
        <title>Proteogenomic analysis of Mycobacterium tuberculosis by high resolution mass spectrometry.</title>
        <authorList>
            <person name="Kelkar D.S."/>
            <person name="Kumar D."/>
            <person name="Kumar P."/>
            <person name="Balakrishnan L."/>
            <person name="Muthusamy B."/>
            <person name="Yadav A.K."/>
            <person name="Shrivastava P."/>
            <person name="Marimuthu A."/>
            <person name="Anand S."/>
            <person name="Sundaram H."/>
            <person name="Kingsbury R."/>
            <person name="Harsha H.C."/>
            <person name="Nair B."/>
            <person name="Prasad T.S."/>
            <person name="Chauhan D.S."/>
            <person name="Katoch K."/>
            <person name="Katoch V.M."/>
            <person name="Kumar P."/>
            <person name="Chaerkady R."/>
            <person name="Ramachandran S."/>
            <person name="Dash D."/>
            <person name="Pandey A."/>
        </authorList>
    </citation>
    <scope>IDENTIFICATION BY MASS SPECTROMETRY [LARGE SCALE ANALYSIS]</scope>
    <source>
        <strain>ATCC 25618 / H37Rv</strain>
    </source>
</reference>
<proteinExistence type="evidence at protein level"/>
<dbReference type="EC" id="2.7.1.175"/>
<dbReference type="EMBL" id="AL123456">
    <property type="protein sequence ID" value="CCP42852.1"/>
    <property type="molecule type" value="Genomic_DNA"/>
</dbReference>
<dbReference type="PIR" id="H70983">
    <property type="entry name" value="H70983"/>
</dbReference>
<dbReference type="RefSeq" id="NP_214641.1">
    <property type="nucleotide sequence ID" value="NC_000962.3"/>
</dbReference>
<dbReference type="RefSeq" id="WP_003916610.1">
    <property type="nucleotide sequence ID" value="NZ_NVQJ01000001.1"/>
</dbReference>
<dbReference type="PDB" id="4O7O">
    <property type="method" value="X-ray"/>
    <property type="resolution" value="2.40 A"/>
    <property type="chains" value="A/B=1-455"/>
</dbReference>
<dbReference type="PDB" id="4O7P">
    <property type="method" value="X-ray"/>
    <property type="resolution" value="2.90 A"/>
    <property type="chains" value="A/B=1-455"/>
</dbReference>
<dbReference type="PDBsum" id="4O7O"/>
<dbReference type="PDBsum" id="4O7P"/>
<dbReference type="SMR" id="O07177"/>
<dbReference type="FunCoup" id="O07177">
    <property type="interactions" value="23"/>
</dbReference>
<dbReference type="IntAct" id="O07177">
    <property type="interactions" value="12"/>
</dbReference>
<dbReference type="MINT" id="O07177"/>
<dbReference type="STRING" id="83332.Rv0127"/>
<dbReference type="PaxDb" id="83332-Rv0127"/>
<dbReference type="DNASU" id="886880"/>
<dbReference type="GeneID" id="886880"/>
<dbReference type="KEGG" id="mtu:Rv0127"/>
<dbReference type="KEGG" id="mtv:RVBD_0127"/>
<dbReference type="TubercuList" id="Rv0127"/>
<dbReference type="eggNOG" id="COG3281">
    <property type="taxonomic scope" value="Bacteria"/>
</dbReference>
<dbReference type="InParanoid" id="O07177"/>
<dbReference type="OrthoDB" id="3787729at2"/>
<dbReference type="PhylomeDB" id="O07177"/>
<dbReference type="BioCyc" id="MetaCyc:G185E-4244-MONOMER"/>
<dbReference type="BRENDA" id="2.7.1.175">
    <property type="organism ID" value="3445"/>
</dbReference>
<dbReference type="UniPathway" id="UPA00164"/>
<dbReference type="EvolutionaryTrace" id="O07177"/>
<dbReference type="Proteomes" id="UP000001584">
    <property type="component" value="Chromosome"/>
</dbReference>
<dbReference type="GO" id="GO:0005829">
    <property type="term" value="C:cytosol"/>
    <property type="evidence" value="ECO:0007005"/>
    <property type="project" value="MTBBASE"/>
</dbReference>
<dbReference type="GO" id="GO:0005886">
    <property type="term" value="C:plasma membrane"/>
    <property type="evidence" value="ECO:0007005"/>
    <property type="project" value="MTBBASE"/>
</dbReference>
<dbReference type="GO" id="GO:0005524">
    <property type="term" value="F:ATP binding"/>
    <property type="evidence" value="ECO:0007669"/>
    <property type="project" value="UniProtKB-KW"/>
</dbReference>
<dbReference type="GO" id="GO:0016301">
    <property type="term" value="F:kinase activity"/>
    <property type="evidence" value="ECO:0007669"/>
    <property type="project" value="UniProtKB-KW"/>
</dbReference>
<dbReference type="GO" id="GO:0046835">
    <property type="term" value="P:carbohydrate phosphorylation"/>
    <property type="evidence" value="ECO:0000250"/>
    <property type="project" value="UniProtKB"/>
</dbReference>
<dbReference type="GO" id="GO:0005978">
    <property type="term" value="P:glycogen biosynthetic process"/>
    <property type="evidence" value="ECO:0007669"/>
    <property type="project" value="UniProtKB-UniPathway"/>
</dbReference>
<dbReference type="GO" id="GO:0005992">
    <property type="term" value="P:trehalose biosynthetic process"/>
    <property type="evidence" value="ECO:0000250"/>
    <property type="project" value="UniProtKB"/>
</dbReference>
<dbReference type="FunFam" id="3.90.1200.10:FF:000010">
    <property type="entry name" value="Maltokinase"/>
    <property type="match status" value="1"/>
</dbReference>
<dbReference type="Gene3D" id="3.90.1200.10">
    <property type="match status" value="1"/>
</dbReference>
<dbReference type="InterPro" id="IPR011009">
    <property type="entry name" value="Kinase-like_dom_sf"/>
</dbReference>
<dbReference type="InterPro" id="IPR040999">
    <property type="entry name" value="Mak_N_cap"/>
</dbReference>
<dbReference type="Pfam" id="PF18085">
    <property type="entry name" value="Mak_N_cap"/>
    <property type="match status" value="1"/>
</dbReference>
<dbReference type="SUPFAM" id="SSF56112">
    <property type="entry name" value="Protein kinase-like (PK-like)"/>
    <property type="match status" value="1"/>
</dbReference>
<organism>
    <name type="scientific">Mycobacterium tuberculosis (strain ATCC 25618 / H37Rv)</name>
    <dbReference type="NCBI Taxonomy" id="83332"/>
    <lineage>
        <taxon>Bacteria</taxon>
        <taxon>Bacillati</taxon>
        <taxon>Actinomycetota</taxon>
        <taxon>Actinomycetes</taxon>
        <taxon>Mycobacteriales</taxon>
        <taxon>Mycobacteriaceae</taxon>
        <taxon>Mycobacterium</taxon>
        <taxon>Mycobacterium tuberculosis complex</taxon>
    </lineage>
</organism>